<keyword id="KW-0240">DNA-directed RNA polymerase</keyword>
<keyword id="KW-0460">Magnesium</keyword>
<keyword id="KW-0479">Metal-binding</keyword>
<keyword id="KW-0548">Nucleotidyltransferase</keyword>
<keyword id="KW-0804">Transcription</keyword>
<keyword id="KW-0808">Transferase</keyword>
<keyword id="KW-0862">Zinc</keyword>
<dbReference type="EC" id="2.7.7.6" evidence="1"/>
<dbReference type="EMBL" id="CP001033">
    <property type="protein sequence ID" value="ACB91177.1"/>
    <property type="molecule type" value="Genomic_DNA"/>
</dbReference>
<dbReference type="RefSeq" id="WP_000228766.1">
    <property type="nucleotide sequence ID" value="NC_010582.1"/>
</dbReference>
<dbReference type="SMR" id="B2IM39"/>
<dbReference type="KEGG" id="spw:SPCG_1924"/>
<dbReference type="HOGENOM" id="CLU_000524_3_1_9"/>
<dbReference type="GO" id="GO:0000428">
    <property type="term" value="C:DNA-directed RNA polymerase complex"/>
    <property type="evidence" value="ECO:0007669"/>
    <property type="project" value="UniProtKB-KW"/>
</dbReference>
<dbReference type="GO" id="GO:0003677">
    <property type="term" value="F:DNA binding"/>
    <property type="evidence" value="ECO:0007669"/>
    <property type="project" value="UniProtKB-UniRule"/>
</dbReference>
<dbReference type="GO" id="GO:0003899">
    <property type="term" value="F:DNA-directed RNA polymerase activity"/>
    <property type="evidence" value="ECO:0007669"/>
    <property type="project" value="UniProtKB-UniRule"/>
</dbReference>
<dbReference type="GO" id="GO:0000287">
    <property type="term" value="F:magnesium ion binding"/>
    <property type="evidence" value="ECO:0007669"/>
    <property type="project" value="UniProtKB-UniRule"/>
</dbReference>
<dbReference type="GO" id="GO:0008270">
    <property type="term" value="F:zinc ion binding"/>
    <property type="evidence" value="ECO:0007669"/>
    <property type="project" value="UniProtKB-UniRule"/>
</dbReference>
<dbReference type="GO" id="GO:0006351">
    <property type="term" value="P:DNA-templated transcription"/>
    <property type="evidence" value="ECO:0007669"/>
    <property type="project" value="UniProtKB-UniRule"/>
</dbReference>
<dbReference type="CDD" id="cd02655">
    <property type="entry name" value="RNAP_beta'_C"/>
    <property type="match status" value="1"/>
</dbReference>
<dbReference type="CDD" id="cd01609">
    <property type="entry name" value="RNAP_beta'_N"/>
    <property type="match status" value="1"/>
</dbReference>
<dbReference type="FunFam" id="1.10.150.390:FF:000002">
    <property type="entry name" value="DNA-directed RNA polymerase subunit beta"/>
    <property type="match status" value="1"/>
</dbReference>
<dbReference type="FunFam" id="4.10.860.120:FF:000001">
    <property type="entry name" value="DNA-directed RNA polymerase subunit beta"/>
    <property type="match status" value="1"/>
</dbReference>
<dbReference type="Gene3D" id="1.10.132.30">
    <property type="match status" value="1"/>
</dbReference>
<dbReference type="Gene3D" id="1.10.150.390">
    <property type="match status" value="1"/>
</dbReference>
<dbReference type="Gene3D" id="1.10.1790.20">
    <property type="match status" value="1"/>
</dbReference>
<dbReference type="Gene3D" id="1.10.40.90">
    <property type="match status" value="1"/>
</dbReference>
<dbReference type="Gene3D" id="2.40.40.20">
    <property type="match status" value="1"/>
</dbReference>
<dbReference type="Gene3D" id="2.40.50.100">
    <property type="match status" value="1"/>
</dbReference>
<dbReference type="Gene3D" id="4.10.860.120">
    <property type="entry name" value="RNA polymerase II, clamp domain"/>
    <property type="match status" value="1"/>
</dbReference>
<dbReference type="Gene3D" id="1.10.274.100">
    <property type="entry name" value="RNA polymerase Rpb1, domain 3"/>
    <property type="match status" value="1"/>
</dbReference>
<dbReference type="HAMAP" id="MF_01322">
    <property type="entry name" value="RNApol_bact_RpoC"/>
    <property type="match status" value="1"/>
</dbReference>
<dbReference type="InterPro" id="IPR045867">
    <property type="entry name" value="DNA-dir_RpoC_beta_prime"/>
</dbReference>
<dbReference type="InterPro" id="IPR012754">
    <property type="entry name" value="DNA-dir_RpoC_beta_prime_bact"/>
</dbReference>
<dbReference type="InterPro" id="IPR000722">
    <property type="entry name" value="RNA_pol_asu"/>
</dbReference>
<dbReference type="InterPro" id="IPR006592">
    <property type="entry name" value="RNA_pol_N"/>
</dbReference>
<dbReference type="InterPro" id="IPR007080">
    <property type="entry name" value="RNA_pol_Rpb1_1"/>
</dbReference>
<dbReference type="InterPro" id="IPR007066">
    <property type="entry name" value="RNA_pol_Rpb1_3"/>
</dbReference>
<dbReference type="InterPro" id="IPR042102">
    <property type="entry name" value="RNA_pol_Rpb1_3_sf"/>
</dbReference>
<dbReference type="InterPro" id="IPR007083">
    <property type="entry name" value="RNA_pol_Rpb1_4"/>
</dbReference>
<dbReference type="InterPro" id="IPR007081">
    <property type="entry name" value="RNA_pol_Rpb1_5"/>
</dbReference>
<dbReference type="InterPro" id="IPR044893">
    <property type="entry name" value="RNA_pol_Rpb1_clamp_domain"/>
</dbReference>
<dbReference type="InterPro" id="IPR038120">
    <property type="entry name" value="Rpb1_funnel_sf"/>
</dbReference>
<dbReference type="NCBIfam" id="TIGR02386">
    <property type="entry name" value="rpoC_TIGR"/>
    <property type="match status" value="1"/>
</dbReference>
<dbReference type="PANTHER" id="PTHR19376">
    <property type="entry name" value="DNA-DIRECTED RNA POLYMERASE"/>
    <property type="match status" value="1"/>
</dbReference>
<dbReference type="PANTHER" id="PTHR19376:SF54">
    <property type="entry name" value="DNA-DIRECTED RNA POLYMERASE SUBUNIT BETA"/>
    <property type="match status" value="1"/>
</dbReference>
<dbReference type="Pfam" id="PF04997">
    <property type="entry name" value="RNA_pol_Rpb1_1"/>
    <property type="match status" value="1"/>
</dbReference>
<dbReference type="Pfam" id="PF00623">
    <property type="entry name" value="RNA_pol_Rpb1_2"/>
    <property type="match status" value="2"/>
</dbReference>
<dbReference type="Pfam" id="PF04983">
    <property type="entry name" value="RNA_pol_Rpb1_3"/>
    <property type="match status" value="1"/>
</dbReference>
<dbReference type="Pfam" id="PF05000">
    <property type="entry name" value="RNA_pol_Rpb1_4"/>
    <property type="match status" value="1"/>
</dbReference>
<dbReference type="Pfam" id="PF04998">
    <property type="entry name" value="RNA_pol_Rpb1_5"/>
    <property type="match status" value="1"/>
</dbReference>
<dbReference type="SMART" id="SM00663">
    <property type="entry name" value="RPOLA_N"/>
    <property type="match status" value="1"/>
</dbReference>
<dbReference type="SUPFAM" id="SSF64484">
    <property type="entry name" value="beta and beta-prime subunits of DNA dependent RNA-polymerase"/>
    <property type="match status" value="1"/>
</dbReference>
<comment type="function">
    <text evidence="1">DNA-dependent RNA polymerase catalyzes the transcription of DNA into RNA using the four ribonucleoside triphosphates as substrates.</text>
</comment>
<comment type="catalytic activity">
    <reaction evidence="1">
        <text>RNA(n) + a ribonucleoside 5'-triphosphate = RNA(n+1) + diphosphate</text>
        <dbReference type="Rhea" id="RHEA:21248"/>
        <dbReference type="Rhea" id="RHEA-COMP:14527"/>
        <dbReference type="Rhea" id="RHEA-COMP:17342"/>
        <dbReference type="ChEBI" id="CHEBI:33019"/>
        <dbReference type="ChEBI" id="CHEBI:61557"/>
        <dbReference type="ChEBI" id="CHEBI:140395"/>
        <dbReference type="EC" id="2.7.7.6"/>
    </reaction>
</comment>
<comment type="cofactor">
    <cofactor evidence="1">
        <name>Mg(2+)</name>
        <dbReference type="ChEBI" id="CHEBI:18420"/>
    </cofactor>
    <text evidence="1">Binds 1 Mg(2+) ion per subunit.</text>
</comment>
<comment type="cofactor">
    <cofactor evidence="1">
        <name>Zn(2+)</name>
        <dbReference type="ChEBI" id="CHEBI:29105"/>
    </cofactor>
    <text evidence="1">Binds 2 Zn(2+) ions per subunit.</text>
</comment>
<comment type="subunit">
    <text evidence="1">The RNAP catalytic core consists of 2 alpha, 1 beta, 1 beta' and 1 omega subunit. When a sigma factor is associated with the core the holoenzyme is formed, which can initiate transcription.</text>
</comment>
<comment type="similarity">
    <text evidence="1">Belongs to the RNA polymerase beta' chain family.</text>
</comment>
<feature type="chain" id="PRO_1000141796" description="DNA-directed RNA polymerase subunit beta'">
    <location>
        <begin position="1"/>
        <end position="1225"/>
    </location>
</feature>
<feature type="binding site" evidence="1">
    <location>
        <position position="60"/>
    </location>
    <ligand>
        <name>Zn(2+)</name>
        <dbReference type="ChEBI" id="CHEBI:29105"/>
        <label>1</label>
    </ligand>
</feature>
<feature type="binding site" evidence="1">
    <location>
        <position position="62"/>
    </location>
    <ligand>
        <name>Zn(2+)</name>
        <dbReference type="ChEBI" id="CHEBI:29105"/>
        <label>1</label>
    </ligand>
</feature>
<feature type="binding site" evidence="1">
    <location>
        <position position="75"/>
    </location>
    <ligand>
        <name>Zn(2+)</name>
        <dbReference type="ChEBI" id="CHEBI:29105"/>
        <label>1</label>
    </ligand>
</feature>
<feature type="binding site" evidence="1">
    <location>
        <position position="78"/>
    </location>
    <ligand>
        <name>Zn(2+)</name>
        <dbReference type="ChEBI" id="CHEBI:29105"/>
        <label>1</label>
    </ligand>
</feature>
<feature type="binding site" evidence="1">
    <location>
        <position position="450"/>
    </location>
    <ligand>
        <name>Mg(2+)</name>
        <dbReference type="ChEBI" id="CHEBI:18420"/>
    </ligand>
</feature>
<feature type="binding site" evidence="1">
    <location>
        <position position="452"/>
    </location>
    <ligand>
        <name>Mg(2+)</name>
        <dbReference type="ChEBI" id="CHEBI:18420"/>
    </ligand>
</feature>
<feature type="binding site" evidence="1">
    <location>
        <position position="454"/>
    </location>
    <ligand>
        <name>Mg(2+)</name>
        <dbReference type="ChEBI" id="CHEBI:18420"/>
    </ligand>
</feature>
<feature type="binding site" evidence="1">
    <location>
        <position position="818"/>
    </location>
    <ligand>
        <name>Zn(2+)</name>
        <dbReference type="ChEBI" id="CHEBI:29105"/>
        <label>2</label>
    </ligand>
</feature>
<feature type="binding site" evidence="1">
    <location>
        <position position="892"/>
    </location>
    <ligand>
        <name>Zn(2+)</name>
        <dbReference type="ChEBI" id="CHEBI:29105"/>
        <label>2</label>
    </ligand>
</feature>
<feature type="binding site" evidence="1">
    <location>
        <position position="899"/>
    </location>
    <ligand>
        <name>Zn(2+)</name>
        <dbReference type="ChEBI" id="CHEBI:29105"/>
        <label>2</label>
    </ligand>
</feature>
<feature type="binding site" evidence="1">
    <location>
        <position position="902"/>
    </location>
    <ligand>
        <name>Zn(2+)</name>
        <dbReference type="ChEBI" id="CHEBI:29105"/>
        <label>2</label>
    </ligand>
</feature>
<name>RPOC_STRPS</name>
<reference key="1">
    <citation type="journal article" date="2009" name="BMC Genomics">
        <title>Genome evolution driven by host adaptations results in a more virulent and antimicrobial-resistant Streptococcus pneumoniae serotype 14.</title>
        <authorList>
            <person name="Ding F."/>
            <person name="Tang P."/>
            <person name="Hsu M.-H."/>
            <person name="Cui P."/>
            <person name="Hu S."/>
            <person name="Yu J."/>
            <person name="Chiu C.-H."/>
        </authorList>
    </citation>
    <scope>NUCLEOTIDE SEQUENCE [LARGE SCALE GENOMIC DNA]</scope>
    <source>
        <strain>CGSP14</strain>
    </source>
</reference>
<gene>
    <name evidence="1" type="primary">rpoC</name>
    <name type="ordered locus">SPCG_1924</name>
</gene>
<accession>B2IM39</accession>
<proteinExistence type="inferred from homology"/>
<organism>
    <name type="scientific">Streptococcus pneumoniae (strain CGSP14)</name>
    <dbReference type="NCBI Taxonomy" id="516950"/>
    <lineage>
        <taxon>Bacteria</taxon>
        <taxon>Bacillati</taxon>
        <taxon>Bacillota</taxon>
        <taxon>Bacilli</taxon>
        <taxon>Lactobacillales</taxon>
        <taxon>Streptococcaceae</taxon>
        <taxon>Streptococcus</taxon>
    </lineage>
</organism>
<sequence>MVDVNRFKSMQITLASPSKVRSWSYGEVKKPETINYRTLKPEREGLFDEVIFGPTKDWECACGKYKRIRYRGIVCDRCGVEVTRTKVRRERMGHIELKAPVSHIWYFKGIPSRMGLTLDMSPRALEEVIYFAAYVVIDPKDTPLEHKSIMTEREYRERLREYGYGSFVAKMGAEAIQDLLKQVDLEKEIAELKEELKTATGQKRVKAIRRLDVLDAFYKSGNKPEWMILNILPVIPPDLRPMLQLDGGRFASSDLNDLYRRVINRNNRLARLLELNAPGIIVQNEKRMLQEAVDALIDNGRRGRPITGPGSRPLKSLSHMLKGKQGRFRQNLLGKRVDFSGRSVIAVGPTLKMYQCGVPREMAIELFKPFVMREIVARDIVQNVKAAKRLVERGDERIWDILEEVIKEHPVLLNRAPTLHRLGIQAFEPVLIDGKALRLHPLVCEAYNADFDGDQMAIHVPLSEEAQAEARILMLAAEHILNPKDGKPVVTPSQDMVLGNYYLTMEEAGREGEGMVFKDRDEAVMAYRNGYVHLHSRVGIATDSLNKPWTEEQRHKVLLTTVGKILFNDIMPEGLPYLQEPNNANLTEGVPAKYFLPLGGDIKEAISNLELNPPFKKKNLGNIIAEIFKRFRTTETSALLDRMKNLGYHHSTLAGLTVGIADIPVVDDKAEIIEESHKRVEQITKQFRRGMITDDERYNAVTAEWRAAREKLEKRLIANQDPKNPIVMMMDSGARGNISNFSQLAGMRGLMAAPNGRIMELPILSNFREGLSVLEMFFSTHGARKGMTDTALKTADSGYLTRRLVDVAQDVIIREDDCGTDRGLLIRSIAEGKEMIESLEERLNGRYTKKTVKHPETGAVIIGPNELITEDKAREIVNAGVEEVTIRSVFTCNTRHGVCRHCYGINLATGDAVEVGEAVGTIAAQSIGEPGTQLTMRTFHTGGVASNTDITQGLPRVQEIFEARNPKGEAVITEVKGQVTAIEEDASTRTKKVFVKGETGEGEYVVPFTARMRVEVGGQVARGAALTEGSIQPKRLLAVRDVLSVETYLLGEVQKVYRSQGVEIGDKHIEVMVRQMIRKVRVMDPGDTDLLMGTLMDINDFTDANKDVLIAGGVPATGRPVLMGITKASLETNSFLSAASFQETTRVLTDAAIRGKKDHLLGLKENVIIGKIIPAGTGMARYRNLEPHAVNEEEYLNPPVEEEGNEETTEVVVDTAVETVEETVE</sequence>
<evidence type="ECO:0000255" key="1">
    <source>
        <dbReference type="HAMAP-Rule" id="MF_01322"/>
    </source>
</evidence>
<protein>
    <recommendedName>
        <fullName evidence="1">DNA-directed RNA polymerase subunit beta'</fullName>
        <shortName evidence="1">RNAP subunit beta'</shortName>
        <ecNumber evidence="1">2.7.7.6</ecNumber>
    </recommendedName>
    <alternativeName>
        <fullName evidence="1">RNA polymerase subunit beta'</fullName>
    </alternativeName>
    <alternativeName>
        <fullName evidence="1">Transcriptase subunit beta'</fullName>
    </alternativeName>
</protein>